<organism>
    <name type="scientific">Teredinibacter turnerae (strain ATCC 39867 / T7901)</name>
    <dbReference type="NCBI Taxonomy" id="377629"/>
    <lineage>
        <taxon>Bacteria</taxon>
        <taxon>Pseudomonadati</taxon>
        <taxon>Pseudomonadota</taxon>
        <taxon>Gammaproteobacteria</taxon>
        <taxon>Cellvibrionales</taxon>
        <taxon>Cellvibrionaceae</taxon>
        <taxon>Teredinibacter</taxon>
    </lineage>
</organism>
<reference key="1">
    <citation type="journal article" date="2009" name="PLoS ONE">
        <title>The complete genome of Teredinibacter turnerae T7901: an intracellular endosymbiont of marine wood-boring bivalves (shipworms).</title>
        <authorList>
            <person name="Yang J.C."/>
            <person name="Madupu R."/>
            <person name="Durkin A.S."/>
            <person name="Ekborg N.A."/>
            <person name="Pedamallu C.S."/>
            <person name="Hostetler J.B."/>
            <person name="Radune D."/>
            <person name="Toms B.S."/>
            <person name="Henrissat B."/>
            <person name="Coutinho P.M."/>
            <person name="Schwarz S."/>
            <person name="Field L."/>
            <person name="Trindade-Silva A.E."/>
            <person name="Soares C.A.G."/>
            <person name="Elshahawi S."/>
            <person name="Hanora A."/>
            <person name="Schmidt E.W."/>
            <person name="Haygood M.G."/>
            <person name="Posfai J."/>
            <person name="Benner J."/>
            <person name="Madinger C."/>
            <person name="Nove J."/>
            <person name="Anton B."/>
            <person name="Chaudhary K."/>
            <person name="Foster J."/>
            <person name="Holman A."/>
            <person name="Kumar S."/>
            <person name="Lessard P.A."/>
            <person name="Luyten Y.A."/>
            <person name="Slatko B."/>
            <person name="Wood N."/>
            <person name="Wu B."/>
            <person name="Teplitski M."/>
            <person name="Mougous J.D."/>
            <person name="Ward N."/>
            <person name="Eisen J.A."/>
            <person name="Badger J.H."/>
            <person name="Distel D.L."/>
        </authorList>
    </citation>
    <scope>NUCLEOTIDE SEQUENCE [LARGE SCALE GENOMIC DNA]</scope>
    <source>
        <strain>ATCC 39867 / T7901</strain>
    </source>
</reference>
<sequence>MKRVVYPGTFDPITNGHIDLVQRASKLFDSVVIAVAASNRKGPLFTLEERVSLAQKALSHLSNIEVCGFDCLLKDLVEEKQAYGVVRGLRAVSDFEYEFQLANMNRALAPSMESLFLTPAEHLSYISSSLVKEIASLGGDVSKFVPKLVQSALTDKYNELKA</sequence>
<protein>
    <recommendedName>
        <fullName evidence="1">Phosphopantetheine adenylyltransferase</fullName>
        <ecNumber evidence="1">2.7.7.3</ecNumber>
    </recommendedName>
    <alternativeName>
        <fullName evidence="1">Dephospho-CoA pyrophosphorylase</fullName>
    </alternativeName>
    <alternativeName>
        <fullName evidence="1">Pantetheine-phosphate adenylyltransferase</fullName>
        <shortName evidence="1">PPAT</shortName>
    </alternativeName>
</protein>
<comment type="function">
    <text evidence="1">Reversibly transfers an adenylyl group from ATP to 4'-phosphopantetheine, yielding dephospho-CoA (dPCoA) and pyrophosphate.</text>
</comment>
<comment type="catalytic activity">
    <reaction evidence="1">
        <text>(R)-4'-phosphopantetheine + ATP + H(+) = 3'-dephospho-CoA + diphosphate</text>
        <dbReference type="Rhea" id="RHEA:19801"/>
        <dbReference type="ChEBI" id="CHEBI:15378"/>
        <dbReference type="ChEBI" id="CHEBI:30616"/>
        <dbReference type="ChEBI" id="CHEBI:33019"/>
        <dbReference type="ChEBI" id="CHEBI:57328"/>
        <dbReference type="ChEBI" id="CHEBI:61723"/>
        <dbReference type="EC" id="2.7.7.3"/>
    </reaction>
</comment>
<comment type="cofactor">
    <cofactor evidence="1">
        <name>Mg(2+)</name>
        <dbReference type="ChEBI" id="CHEBI:18420"/>
    </cofactor>
</comment>
<comment type="pathway">
    <text evidence="1">Cofactor biosynthesis; coenzyme A biosynthesis; CoA from (R)-pantothenate: step 4/5.</text>
</comment>
<comment type="subunit">
    <text evidence="1">Homohexamer.</text>
</comment>
<comment type="subcellular location">
    <subcellularLocation>
        <location evidence="1">Cytoplasm</location>
    </subcellularLocation>
</comment>
<comment type="similarity">
    <text evidence="1">Belongs to the bacterial CoaD family.</text>
</comment>
<dbReference type="EC" id="2.7.7.3" evidence="1"/>
<dbReference type="EMBL" id="CP001614">
    <property type="protein sequence ID" value="ACR13672.1"/>
    <property type="molecule type" value="Genomic_DNA"/>
</dbReference>
<dbReference type="RefSeq" id="WP_015819787.1">
    <property type="nucleotide sequence ID" value="NC_012997.1"/>
</dbReference>
<dbReference type="SMR" id="C5BLM4"/>
<dbReference type="STRING" id="377629.TERTU_0246"/>
<dbReference type="KEGG" id="ttu:TERTU_0246"/>
<dbReference type="eggNOG" id="COG0669">
    <property type="taxonomic scope" value="Bacteria"/>
</dbReference>
<dbReference type="HOGENOM" id="CLU_100149_0_1_6"/>
<dbReference type="OrthoDB" id="9806661at2"/>
<dbReference type="UniPathway" id="UPA00241">
    <property type="reaction ID" value="UER00355"/>
</dbReference>
<dbReference type="Proteomes" id="UP000009080">
    <property type="component" value="Chromosome"/>
</dbReference>
<dbReference type="GO" id="GO:0005737">
    <property type="term" value="C:cytoplasm"/>
    <property type="evidence" value="ECO:0007669"/>
    <property type="project" value="UniProtKB-SubCell"/>
</dbReference>
<dbReference type="GO" id="GO:0005524">
    <property type="term" value="F:ATP binding"/>
    <property type="evidence" value="ECO:0007669"/>
    <property type="project" value="UniProtKB-KW"/>
</dbReference>
<dbReference type="GO" id="GO:0004595">
    <property type="term" value="F:pantetheine-phosphate adenylyltransferase activity"/>
    <property type="evidence" value="ECO:0007669"/>
    <property type="project" value="UniProtKB-UniRule"/>
</dbReference>
<dbReference type="GO" id="GO:0015937">
    <property type="term" value="P:coenzyme A biosynthetic process"/>
    <property type="evidence" value="ECO:0007669"/>
    <property type="project" value="UniProtKB-UniRule"/>
</dbReference>
<dbReference type="CDD" id="cd02163">
    <property type="entry name" value="PPAT"/>
    <property type="match status" value="1"/>
</dbReference>
<dbReference type="Gene3D" id="3.40.50.620">
    <property type="entry name" value="HUPs"/>
    <property type="match status" value="1"/>
</dbReference>
<dbReference type="HAMAP" id="MF_00151">
    <property type="entry name" value="PPAT_bact"/>
    <property type="match status" value="1"/>
</dbReference>
<dbReference type="InterPro" id="IPR004821">
    <property type="entry name" value="Cyt_trans-like"/>
</dbReference>
<dbReference type="InterPro" id="IPR001980">
    <property type="entry name" value="PPAT"/>
</dbReference>
<dbReference type="InterPro" id="IPR014729">
    <property type="entry name" value="Rossmann-like_a/b/a_fold"/>
</dbReference>
<dbReference type="NCBIfam" id="TIGR01510">
    <property type="entry name" value="coaD_prev_kdtB"/>
    <property type="match status" value="1"/>
</dbReference>
<dbReference type="NCBIfam" id="TIGR00125">
    <property type="entry name" value="cyt_tran_rel"/>
    <property type="match status" value="1"/>
</dbReference>
<dbReference type="PANTHER" id="PTHR21342">
    <property type="entry name" value="PHOSPHOPANTETHEINE ADENYLYLTRANSFERASE"/>
    <property type="match status" value="1"/>
</dbReference>
<dbReference type="PANTHER" id="PTHR21342:SF1">
    <property type="entry name" value="PHOSPHOPANTETHEINE ADENYLYLTRANSFERASE"/>
    <property type="match status" value="1"/>
</dbReference>
<dbReference type="Pfam" id="PF01467">
    <property type="entry name" value="CTP_transf_like"/>
    <property type="match status" value="1"/>
</dbReference>
<dbReference type="PRINTS" id="PR01020">
    <property type="entry name" value="LPSBIOSNTHSS"/>
</dbReference>
<dbReference type="SUPFAM" id="SSF52374">
    <property type="entry name" value="Nucleotidylyl transferase"/>
    <property type="match status" value="1"/>
</dbReference>
<feature type="chain" id="PRO_1000203434" description="Phosphopantetheine adenylyltransferase">
    <location>
        <begin position="1"/>
        <end position="162"/>
    </location>
</feature>
<feature type="binding site" evidence="1">
    <location>
        <begin position="9"/>
        <end position="10"/>
    </location>
    <ligand>
        <name>ATP</name>
        <dbReference type="ChEBI" id="CHEBI:30616"/>
    </ligand>
</feature>
<feature type="binding site" evidence="1">
    <location>
        <position position="9"/>
    </location>
    <ligand>
        <name>substrate</name>
    </ligand>
</feature>
<feature type="binding site" evidence="1">
    <location>
        <position position="17"/>
    </location>
    <ligand>
        <name>ATP</name>
        <dbReference type="ChEBI" id="CHEBI:30616"/>
    </ligand>
</feature>
<feature type="binding site" evidence="1">
    <location>
        <position position="41"/>
    </location>
    <ligand>
        <name>substrate</name>
    </ligand>
</feature>
<feature type="binding site" evidence="1">
    <location>
        <position position="73"/>
    </location>
    <ligand>
        <name>substrate</name>
    </ligand>
</feature>
<feature type="binding site" evidence="1">
    <location>
        <position position="87"/>
    </location>
    <ligand>
        <name>substrate</name>
    </ligand>
</feature>
<feature type="binding site" evidence="1">
    <location>
        <begin position="88"/>
        <end position="90"/>
    </location>
    <ligand>
        <name>ATP</name>
        <dbReference type="ChEBI" id="CHEBI:30616"/>
    </ligand>
</feature>
<feature type="binding site" evidence="1">
    <location>
        <position position="98"/>
    </location>
    <ligand>
        <name>ATP</name>
        <dbReference type="ChEBI" id="CHEBI:30616"/>
    </ligand>
</feature>
<feature type="binding site" evidence="1">
    <location>
        <begin position="123"/>
        <end position="129"/>
    </location>
    <ligand>
        <name>ATP</name>
        <dbReference type="ChEBI" id="CHEBI:30616"/>
    </ligand>
</feature>
<feature type="site" description="Transition state stabilizer" evidence="1">
    <location>
        <position position="17"/>
    </location>
</feature>
<name>COAD_TERTT</name>
<accession>C5BLM4</accession>
<proteinExistence type="inferred from homology"/>
<gene>
    <name evidence="1" type="primary">coaD</name>
    <name type="ordered locus">TERTU_0246</name>
</gene>
<keyword id="KW-0067">ATP-binding</keyword>
<keyword id="KW-0173">Coenzyme A biosynthesis</keyword>
<keyword id="KW-0963">Cytoplasm</keyword>
<keyword id="KW-0460">Magnesium</keyword>
<keyword id="KW-0547">Nucleotide-binding</keyword>
<keyword id="KW-0548">Nucleotidyltransferase</keyword>
<keyword id="KW-1185">Reference proteome</keyword>
<keyword id="KW-0808">Transferase</keyword>
<evidence type="ECO:0000255" key="1">
    <source>
        <dbReference type="HAMAP-Rule" id="MF_00151"/>
    </source>
</evidence>